<proteinExistence type="inferred from homology"/>
<reference key="1">
    <citation type="submission" date="2007-10" db="EMBL/GenBank/DDBJ databases">
        <title>Brucella canis ATCC 23365 whole genome shotgun sequencing project.</title>
        <authorList>
            <person name="Setubal J.C."/>
            <person name="Bowns C."/>
            <person name="Boyle S."/>
            <person name="Crasta O.R."/>
            <person name="Czar M.J."/>
            <person name="Dharmanolla C."/>
            <person name="Gillespie J.J."/>
            <person name="Kenyon R.W."/>
            <person name="Lu J."/>
            <person name="Mane S."/>
            <person name="Mohapatra S."/>
            <person name="Nagrani S."/>
            <person name="Purkayastha A."/>
            <person name="Rajasimha H.K."/>
            <person name="Shallom J.M."/>
            <person name="Shallom S."/>
            <person name="Shukla M."/>
            <person name="Snyder E.E."/>
            <person name="Sobral B.W."/>
            <person name="Wattam A.R."/>
            <person name="Will R."/>
            <person name="Williams K."/>
            <person name="Yoo H."/>
            <person name="Bruce D."/>
            <person name="Detter C."/>
            <person name="Munk C."/>
            <person name="Brettin T.S."/>
        </authorList>
    </citation>
    <scope>NUCLEOTIDE SEQUENCE [LARGE SCALE GENOMIC DNA]</scope>
    <source>
        <strain>ATCC 23365 / NCTC 10854 / RM-666</strain>
    </source>
</reference>
<gene>
    <name evidence="1" type="primary">rpsE</name>
    <name type="ordered locus">BCAN_A1239</name>
</gene>
<keyword id="KW-1185">Reference proteome</keyword>
<keyword id="KW-0687">Ribonucleoprotein</keyword>
<keyword id="KW-0689">Ribosomal protein</keyword>
<keyword id="KW-0694">RNA-binding</keyword>
<keyword id="KW-0699">rRNA-binding</keyword>
<organism>
    <name type="scientific">Brucella canis (strain ATCC 23365 / NCTC 10854 / RM-666)</name>
    <dbReference type="NCBI Taxonomy" id="483179"/>
    <lineage>
        <taxon>Bacteria</taxon>
        <taxon>Pseudomonadati</taxon>
        <taxon>Pseudomonadota</taxon>
        <taxon>Alphaproteobacteria</taxon>
        <taxon>Hyphomicrobiales</taxon>
        <taxon>Brucellaceae</taxon>
        <taxon>Brucella/Ochrobactrum group</taxon>
        <taxon>Brucella</taxon>
    </lineage>
</organism>
<comment type="function">
    <text evidence="1">With S4 and S12 plays an important role in translational accuracy.</text>
</comment>
<comment type="function">
    <text evidence="1">Located at the back of the 30S subunit body where it stabilizes the conformation of the head with respect to the body.</text>
</comment>
<comment type="subunit">
    <text evidence="1">Part of the 30S ribosomal subunit. Contacts proteins S4 and S8.</text>
</comment>
<comment type="domain">
    <text>The N-terminal domain interacts with the head of the 30S subunit; the C-terminal domain interacts with the body and contacts protein S4. The interaction surface between S4 and S5 is involved in control of translational fidelity.</text>
</comment>
<comment type="similarity">
    <text evidence="1">Belongs to the universal ribosomal protein uS5 family.</text>
</comment>
<protein>
    <recommendedName>
        <fullName evidence="1">Small ribosomal subunit protein uS5</fullName>
    </recommendedName>
    <alternativeName>
        <fullName evidence="2">30S ribosomal protein S5</fullName>
    </alternativeName>
</protein>
<name>RS5_BRUC2</name>
<feature type="chain" id="PRO_1000085998" description="Small ribosomal subunit protein uS5">
    <location>
        <begin position="1"/>
        <end position="186"/>
    </location>
</feature>
<feature type="domain" description="S5 DRBM" evidence="1">
    <location>
        <begin position="20"/>
        <end position="83"/>
    </location>
</feature>
<sequence length="186" mass="20464">MAQRERNREERGREERDSEFVDKLVHINRVAKVVKGGRRFGFAALVVVGDQKGRVGFGHGKAREVPEAIRKATEAAKRDMIFVPLRSGRTLHHDVEGRHGAGKVLLRAAPAGKGIIAGGPMRAVFETLGVQDVVAKSLGSSNPYNMVRATFDALKHQMHPKDIAAQRGIKYSTLQARRHDVVGSEE</sequence>
<evidence type="ECO:0000255" key="1">
    <source>
        <dbReference type="HAMAP-Rule" id="MF_01307"/>
    </source>
</evidence>
<evidence type="ECO:0000305" key="2"/>
<dbReference type="EMBL" id="CP000872">
    <property type="protein sequence ID" value="ABX62288.1"/>
    <property type="molecule type" value="Genomic_DNA"/>
</dbReference>
<dbReference type="RefSeq" id="WP_002964345.1">
    <property type="nucleotide sequence ID" value="NC_010103.1"/>
</dbReference>
<dbReference type="SMR" id="A9M5N3"/>
<dbReference type="GeneID" id="93016456"/>
<dbReference type="KEGG" id="bcs:BCAN_A1239"/>
<dbReference type="HOGENOM" id="CLU_065898_2_2_5"/>
<dbReference type="PhylomeDB" id="A9M5N3"/>
<dbReference type="Proteomes" id="UP000001385">
    <property type="component" value="Chromosome I"/>
</dbReference>
<dbReference type="GO" id="GO:0015935">
    <property type="term" value="C:small ribosomal subunit"/>
    <property type="evidence" value="ECO:0007669"/>
    <property type="project" value="InterPro"/>
</dbReference>
<dbReference type="GO" id="GO:0019843">
    <property type="term" value="F:rRNA binding"/>
    <property type="evidence" value="ECO:0007669"/>
    <property type="project" value="UniProtKB-UniRule"/>
</dbReference>
<dbReference type="GO" id="GO:0003735">
    <property type="term" value="F:structural constituent of ribosome"/>
    <property type="evidence" value="ECO:0007669"/>
    <property type="project" value="InterPro"/>
</dbReference>
<dbReference type="GO" id="GO:0006412">
    <property type="term" value="P:translation"/>
    <property type="evidence" value="ECO:0007669"/>
    <property type="project" value="UniProtKB-UniRule"/>
</dbReference>
<dbReference type="FunFam" id="3.30.160.20:FF:000001">
    <property type="entry name" value="30S ribosomal protein S5"/>
    <property type="match status" value="1"/>
</dbReference>
<dbReference type="FunFam" id="3.30.230.10:FF:000002">
    <property type="entry name" value="30S ribosomal protein S5"/>
    <property type="match status" value="1"/>
</dbReference>
<dbReference type="Gene3D" id="3.30.160.20">
    <property type="match status" value="1"/>
</dbReference>
<dbReference type="Gene3D" id="3.30.230.10">
    <property type="match status" value="1"/>
</dbReference>
<dbReference type="HAMAP" id="MF_01307_B">
    <property type="entry name" value="Ribosomal_uS5_B"/>
    <property type="match status" value="1"/>
</dbReference>
<dbReference type="InterPro" id="IPR020568">
    <property type="entry name" value="Ribosomal_Su5_D2-typ_SF"/>
</dbReference>
<dbReference type="InterPro" id="IPR000851">
    <property type="entry name" value="Ribosomal_uS5"/>
</dbReference>
<dbReference type="InterPro" id="IPR005712">
    <property type="entry name" value="Ribosomal_uS5_bac-type"/>
</dbReference>
<dbReference type="InterPro" id="IPR005324">
    <property type="entry name" value="Ribosomal_uS5_C"/>
</dbReference>
<dbReference type="InterPro" id="IPR013810">
    <property type="entry name" value="Ribosomal_uS5_N"/>
</dbReference>
<dbReference type="InterPro" id="IPR018192">
    <property type="entry name" value="Ribosomal_uS5_N_CS"/>
</dbReference>
<dbReference type="InterPro" id="IPR014721">
    <property type="entry name" value="Ribsml_uS5_D2-typ_fold_subgr"/>
</dbReference>
<dbReference type="NCBIfam" id="TIGR01021">
    <property type="entry name" value="rpsE_bact"/>
    <property type="match status" value="1"/>
</dbReference>
<dbReference type="PANTHER" id="PTHR48277">
    <property type="entry name" value="MITOCHONDRIAL RIBOSOMAL PROTEIN S5"/>
    <property type="match status" value="1"/>
</dbReference>
<dbReference type="PANTHER" id="PTHR48277:SF1">
    <property type="entry name" value="MITOCHONDRIAL RIBOSOMAL PROTEIN S5"/>
    <property type="match status" value="1"/>
</dbReference>
<dbReference type="Pfam" id="PF00333">
    <property type="entry name" value="Ribosomal_S5"/>
    <property type="match status" value="1"/>
</dbReference>
<dbReference type="Pfam" id="PF03719">
    <property type="entry name" value="Ribosomal_S5_C"/>
    <property type="match status" value="1"/>
</dbReference>
<dbReference type="SUPFAM" id="SSF54768">
    <property type="entry name" value="dsRNA-binding domain-like"/>
    <property type="match status" value="1"/>
</dbReference>
<dbReference type="SUPFAM" id="SSF54211">
    <property type="entry name" value="Ribosomal protein S5 domain 2-like"/>
    <property type="match status" value="1"/>
</dbReference>
<dbReference type="PROSITE" id="PS00585">
    <property type="entry name" value="RIBOSOMAL_S5"/>
    <property type="match status" value="1"/>
</dbReference>
<dbReference type="PROSITE" id="PS50881">
    <property type="entry name" value="S5_DSRBD"/>
    <property type="match status" value="1"/>
</dbReference>
<accession>A9M5N3</accession>